<dbReference type="EMBL" id="CP000943">
    <property type="protein sequence ID" value="ACA17595.1"/>
    <property type="molecule type" value="Genomic_DNA"/>
</dbReference>
<dbReference type="RefSeq" id="WP_012332995.1">
    <property type="nucleotide sequence ID" value="NC_010511.1"/>
</dbReference>
<dbReference type="SMR" id="B0UNY7"/>
<dbReference type="STRING" id="426117.M446_3189"/>
<dbReference type="KEGG" id="met:M446_3189"/>
<dbReference type="eggNOG" id="COG4973">
    <property type="taxonomic scope" value="Bacteria"/>
</dbReference>
<dbReference type="HOGENOM" id="CLU_027562_9_0_5"/>
<dbReference type="GO" id="GO:0005737">
    <property type="term" value="C:cytoplasm"/>
    <property type="evidence" value="ECO:0007669"/>
    <property type="project" value="UniProtKB-SubCell"/>
</dbReference>
<dbReference type="GO" id="GO:0003677">
    <property type="term" value="F:DNA binding"/>
    <property type="evidence" value="ECO:0007669"/>
    <property type="project" value="UniProtKB-KW"/>
</dbReference>
<dbReference type="GO" id="GO:0009037">
    <property type="term" value="F:tyrosine-based site-specific recombinase activity"/>
    <property type="evidence" value="ECO:0007669"/>
    <property type="project" value="UniProtKB-UniRule"/>
</dbReference>
<dbReference type="GO" id="GO:0051301">
    <property type="term" value="P:cell division"/>
    <property type="evidence" value="ECO:0007669"/>
    <property type="project" value="UniProtKB-KW"/>
</dbReference>
<dbReference type="GO" id="GO:0007059">
    <property type="term" value="P:chromosome segregation"/>
    <property type="evidence" value="ECO:0007669"/>
    <property type="project" value="UniProtKB-UniRule"/>
</dbReference>
<dbReference type="GO" id="GO:0006313">
    <property type="term" value="P:DNA transposition"/>
    <property type="evidence" value="ECO:0007669"/>
    <property type="project" value="UniProtKB-UniRule"/>
</dbReference>
<dbReference type="Gene3D" id="1.10.150.130">
    <property type="match status" value="1"/>
</dbReference>
<dbReference type="Gene3D" id="1.10.443.10">
    <property type="entry name" value="Intergrase catalytic core"/>
    <property type="match status" value="1"/>
</dbReference>
<dbReference type="HAMAP" id="MF_01808">
    <property type="entry name" value="Recomb_XerC_XerD"/>
    <property type="match status" value="1"/>
</dbReference>
<dbReference type="InterPro" id="IPR044068">
    <property type="entry name" value="CB"/>
</dbReference>
<dbReference type="InterPro" id="IPR011010">
    <property type="entry name" value="DNA_brk_join_enz"/>
</dbReference>
<dbReference type="InterPro" id="IPR013762">
    <property type="entry name" value="Integrase-like_cat_sf"/>
</dbReference>
<dbReference type="InterPro" id="IPR002104">
    <property type="entry name" value="Integrase_catalytic"/>
</dbReference>
<dbReference type="InterPro" id="IPR010998">
    <property type="entry name" value="Integrase_recombinase_N"/>
</dbReference>
<dbReference type="InterPro" id="IPR004107">
    <property type="entry name" value="Integrase_SAM-like_N"/>
</dbReference>
<dbReference type="InterPro" id="IPR023009">
    <property type="entry name" value="Tyrosine_recombinase_XerC/XerD"/>
</dbReference>
<dbReference type="InterPro" id="IPR050090">
    <property type="entry name" value="Tyrosine_recombinase_XerCD"/>
</dbReference>
<dbReference type="PANTHER" id="PTHR30349">
    <property type="entry name" value="PHAGE INTEGRASE-RELATED"/>
    <property type="match status" value="1"/>
</dbReference>
<dbReference type="PANTHER" id="PTHR30349:SF90">
    <property type="entry name" value="TYROSINE RECOMBINASE XERD"/>
    <property type="match status" value="1"/>
</dbReference>
<dbReference type="Pfam" id="PF02899">
    <property type="entry name" value="Phage_int_SAM_1"/>
    <property type="match status" value="1"/>
</dbReference>
<dbReference type="Pfam" id="PF00589">
    <property type="entry name" value="Phage_integrase"/>
    <property type="match status" value="1"/>
</dbReference>
<dbReference type="SUPFAM" id="SSF56349">
    <property type="entry name" value="DNA breaking-rejoining enzymes"/>
    <property type="match status" value="1"/>
</dbReference>
<dbReference type="SUPFAM" id="SSF47823">
    <property type="entry name" value="lambda integrase-like, N-terminal domain"/>
    <property type="match status" value="1"/>
</dbReference>
<dbReference type="PROSITE" id="PS51900">
    <property type="entry name" value="CB"/>
    <property type="match status" value="1"/>
</dbReference>
<dbReference type="PROSITE" id="PS51898">
    <property type="entry name" value="TYR_RECOMBINASE"/>
    <property type="match status" value="1"/>
</dbReference>
<protein>
    <recommendedName>
        <fullName evidence="1">Tyrosine recombinase XerC</fullName>
    </recommendedName>
</protein>
<sequence length="320" mass="34114">MLQTTPPDLLPGAADVREAVASWLTLLARERRFSPNTVEAYARDLRQFLAHRARAGTQPDIPSLVALKPRDLRAFMAARRAEGIGGRSLMRALASLRSFARHLEREGHGTVSALSAVRSPKVERRLPRPLPVAAAVALASPDIRAGEDRPDWVLARDAAVLALLYGAGLRIGEALGLRRKDAPVGGLDTLTIVGKGQKTRMVPVIAPVQAALAEYLAACPYALAPDGPLFVGQKGGPLSPRVVQLAVASLRGALGLPDSATPHALRHSFATHLLARQGDLRAIQDLLGHASLATTQIYTKVDSARLMSAFEAAHPRAGRM</sequence>
<name>XERC_METS4</name>
<comment type="function">
    <text evidence="1">Site-specific tyrosine recombinase, which acts by catalyzing the cutting and rejoining of the recombining DNA molecules. The XerC-XerD complex is essential to convert dimers of the bacterial chromosome into monomers to permit their segregation at cell division. It also contributes to the segregational stability of plasmids.</text>
</comment>
<comment type="subunit">
    <text evidence="1">Forms a cyclic heterotetrameric complex composed of two molecules of XerC and two molecules of XerD.</text>
</comment>
<comment type="subcellular location">
    <subcellularLocation>
        <location evidence="1">Cytoplasm</location>
    </subcellularLocation>
</comment>
<comment type="similarity">
    <text evidence="1">Belongs to the 'phage' integrase family. XerC subfamily.</text>
</comment>
<keyword id="KW-0131">Cell cycle</keyword>
<keyword id="KW-0132">Cell division</keyword>
<keyword id="KW-0159">Chromosome partition</keyword>
<keyword id="KW-0963">Cytoplasm</keyword>
<keyword id="KW-0229">DNA integration</keyword>
<keyword id="KW-0233">DNA recombination</keyword>
<keyword id="KW-0238">DNA-binding</keyword>
<proteinExistence type="inferred from homology"/>
<accession>B0UNY7</accession>
<reference key="1">
    <citation type="submission" date="2008-02" db="EMBL/GenBank/DDBJ databases">
        <title>Complete sequence of chromosome of Methylobacterium sp. 4-46.</title>
        <authorList>
            <consortium name="US DOE Joint Genome Institute"/>
            <person name="Copeland A."/>
            <person name="Lucas S."/>
            <person name="Lapidus A."/>
            <person name="Glavina del Rio T."/>
            <person name="Dalin E."/>
            <person name="Tice H."/>
            <person name="Bruce D."/>
            <person name="Goodwin L."/>
            <person name="Pitluck S."/>
            <person name="Chertkov O."/>
            <person name="Brettin T."/>
            <person name="Detter J.C."/>
            <person name="Han C."/>
            <person name="Kuske C.R."/>
            <person name="Schmutz J."/>
            <person name="Larimer F."/>
            <person name="Land M."/>
            <person name="Hauser L."/>
            <person name="Kyrpides N."/>
            <person name="Ivanova N."/>
            <person name="Marx C.J."/>
            <person name="Richardson P."/>
        </authorList>
    </citation>
    <scope>NUCLEOTIDE SEQUENCE [LARGE SCALE GENOMIC DNA]</scope>
    <source>
        <strain>4-46</strain>
    </source>
</reference>
<feature type="chain" id="PRO_1000215955" description="Tyrosine recombinase XerC">
    <location>
        <begin position="1"/>
        <end position="320"/>
    </location>
</feature>
<feature type="domain" description="Core-binding (CB)" evidence="3">
    <location>
        <begin position="14"/>
        <end position="104"/>
    </location>
</feature>
<feature type="domain" description="Tyr recombinase" evidence="2">
    <location>
        <begin position="125"/>
        <end position="311"/>
    </location>
</feature>
<feature type="active site" evidence="1">
    <location>
        <position position="170"/>
    </location>
</feature>
<feature type="active site" evidence="1">
    <location>
        <position position="195"/>
    </location>
</feature>
<feature type="active site" evidence="1">
    <location>
        <position position="263"/>
    </location>
</feature>
<feature type="active site" evidence="1">
    <location>
        <position position="266"/>
    </location>
</feature>
<feature type="active site" evidence="1">
    <location>
        <position position="289"/>
    </location>
</feature>
<feature type="active site" description="O-(3'-phospho-DNA)-tyrosine intermediate" evidence="1">
    <location>
        <position position="298"/>
    </location>
</feature>
<evidence type="ECO:0000255" key="1">
    <source>
        <dbReference type="HAMAP-Rule" id="MF_01808"/>
    </source>
</evidence>
<evidence type="ECO:0000255" key="2">
    <source>
        <dbReference type="PROSITE-ProRule" id="PRU01246"/>
    </source>
</evidence>
<evidence type="ECO:0000255" key="3">
    <source>
        <dbReference type="PROSITE-ProRule" id="PRU01248"/>
    </source>
</evidence>
<organism>
    <name type="scientific">Methylobacterium sp. (strain 4-46)</name>
    <dbReference type="NCBI Taxonomy" id="426117"/>
    <lineage>
        <taxon>Bacteria</taxon>
        <taxon>Pseudomonadati</taxon>
        <taxon>Pseudomonadota</taxon>
        <taxon>Alphaproteobacteria</taxon>
        <taxon>Hyphomicrobiales</taxon>
        <taxon>Methylobacteriaceae</taxon>
        <taxon>Methylobacterium</taxon>
    </lineage>
</organism>
<gene>
    <name evidence="1" type="primary">xerC</name>
    <name type="ordered locus">M446_3189</name>
</gene>